<accession>C1CBB5</accession>
<evidence type="ECO:0000255" key="1">
    <source>
        <dbReference type="HAMAP-Rule" id="MF_00038"/>
    </source>
</evidence>
<feature type="chain" id="PRO_1000117198" description="Phospho-N-acetylmuramoyl-pentapeptide-transferase">
    <location>
        <begin position="1"/>
        <end position="326"/>
    </location>
</feature>
<feature type="transmembrane region" description="Helical" evidence="1">
    <location>
        <begin position="3"/>
        <end position="23"/>
    </location>
</feature>
<feature type="transmembrane region" description="Helical" evidence="1">
    <location>
        <begin position="51"/>
        <end position="71"/>
    </location>
</feature>
<feature type="transmembrane region" description="Helical" evidence="1">
    <location>
        <begin position="79"/>
        <end position="99"/>
    </location>
</feature>
<feature type="transmembrane region" description="Helical" evidence="1">
    <location>
        <begin position="115"/>
        <end position="135"/>
    </location>
</feature>
<feature type="transmembrane region" description="Helical" evidence="1">
    <location>
        <begin position="138"/>
        <end position="158"/>
    </location>
</feature>
<feature type="transmembrane region" description="Helical" evidence="1">
    <location>
        <begin position="169"/>
        <end position="189"/>
    </location>
</feature>
<feature type="transmembrane region" description="Helical" evidence="1">
    <location>
        <begin position="195"/>
        <end position="215"/>
    </location>
</feature>
<feature type="transmembrane region" description="Helical" evidence="1">
    <location>
        <begin position="221"/>
        <end position="243"/>
    </location>
</feature>
<feature type="transmembrane region" description="Helical" evidence="1">
    <location>
        <begin position="306"/>
        <end position="326"/>
    </location>
</feature>
<comment type="function">
    <text evidence="1">Catalyzes the initial step of the lipid cycle reactions in the biosynthesis of the cell wall peptidoglycan: transfers peptidoglycan precursor phospho-MurNAc-pentapeptide from UDP-MurNAc-pentapeptide onto the lipid carrier undecaprenyl phosphate, yielding undecaprenyl-pyrophosphoryl-MurNAc-pentapeptide, known as lipid I.</text>
</comment>
<comment type="catalytic activity">
    <reaction evidence="1">
        <text>UDP-N-acetyl-alpha-D-muramoyl-L-alanyl-gamma-D-glutamyl-L-lysyl-D-alanyl-D-alanine + di-trans,octa-cis-undecaprenyl phosphate = Mur2Ac(oyl-L-Ala-gamma-D-Glu-L-Lys-D-Ala-D-Ala)-di-trans,octa-cis-undecaprenyl diphosphate + UMP</text>
        <dbReference type="Rhea" id="RHEA:21920"/>
        <dbReference type="ChEBI" id="CHEBI:57865"/>
        <dbReference type="ChEBI" id="CHEBI:60032"/>
        <dbReference type="ChEBI" id="CHEBI:60392"/>
        <dbReference type="ChEBI" id="CHEBI:70758"/>
        <dbReference type="EC" id="2.7.8.13"/>
    </reaction>
</comment>
<comment type="cofactor">
    <cofactor evidence="1">
        <name>Mg(2+)</name>
        <dbReference type="ChEBI" id="CHEBI:18420"/>
    </cofactor>
</comment>
<comment type="pathway">
    <text evidence="1">Cell wall biogenesis; peptidoglycan biosynthesis.</text>
</comment>
<comment type="subcellular location">
    <subcellularLocation>
        <location evidence="1">Cell membrane</location>
        <topology evidence="1">Multi-pass membrane protein</topology>
    </subcellularLocation>
</comment>
<comment type="similarity">
    <text evidence="1">Belongs to the glycosyltransferase 4 family. MraY subfamily.</text>
</comment>
<name>MRAY_STRP7</name>
<keyword id="KW-0131">Cell cycle</keyword>
<keyword id="KW-0132">Cell division</keyword>
<keyword id="KW-1003">Cell membrane</keyword>
<keyword id="KW-0133">Cell shape</keyword>
<keyword id="KW-0961">Cell wall biogenesis/degradation</keyword>
<keyword id="KW-0460">Magnesium</keyword>
<keyword id="KW-0472">Membrane</keyword>
<keyword id="KW-0479">Metal-binding</keyword>
<keyword id="KW-0573">Peptidoglycan synthesis</keyword>
<keyword id="KW-0808">Transferase</keyword>
<keyword id="KW-0812">Transmembrane</keyword>
<keyword id="KW-1133">Transmembrane helix</keyword>
<organism>
    <name type="scientific">Streptococcus pneumoniae (strain 70585)</name>
    <dbReference type="NCBI Taxonomy" id="488221"/>
    <lineage>
        <taxon>Bacteria</taxon>
        <taxon>Bacillati</taxon>
        <taxon>Bacillota</taxon>
        <taxon>Bacilli</taxon>
        <taxon>Lactobacillales</taxon>
        <taxon>Streptococcaceae</taxon>
        <taxon>Streptococcus</taxon>
    </lineage>
</organism>
<reference key="1">
    <citation type="journal article" date="2010" name="Genome Biol.">
        <title>Structure and dynamics of the pan-genome of Streptococcus pneumoniae and closely related species.</title>
        <authorList>
            <person name="Donati C."/>
            <person name="Hiller N.L."/>
            <person name="Tettelin H."/>
            <person name="Muzzi A."/>
            <person name="Croucher N.J."/>
            <person name="Angiuoli S.V."/>
            <person name="Oggioni M."/>
            <person name="Dunning Hotopp J.C."/>
            <person name="Hu F.Z."/>
            <person name="Riley D.R."/>
            <person name="Covacci A."/>
            <person name="Mitchell T.J."/>
            <person name="Bentley S.D."/>
            <person name="Kilian M."/>
            <person name="Ehrlich G.D."/>
            <person name="Rappuoli R."/>
            <person name="Moxon E.R."/>
            <person name="Masignani V."/>
        </authorList>
    </citation>
    <scope>NUCLEOTIDE SEQUENCE [LARGE SCALE GENOMIC DNA]</scope>
    <source>
        <strain>70585</strain>
    </source>
</reference>
<sequence>MFISISAGIVTFLLTLVEIPAFIQFYRKAQITGQQMHEDVKQHQAKAGTPTMGGLVFLITSVLVAFFFALFSSQFSNNVGMILFILVLYGLVGFLDDFLKVFRKINEGLNPKQKLALQLLGGVIFYLFYERGGDILSVFGYPVHLGFFYIFFALFWLVGFSNAVNLTDGVDGLASISVVISLSAYGVIAYVQGQMDILLVILAMIGGLLGFFIFNHKPAKVFMGDVGSLALGGMLAAISMALHQEWTLLIIGIVYVFETTSVMMQVSYFKLTGGKRIFRMTPVHHHFELGGLSGKGNPWSEWKVDFFFWGVGLLASLLTLAILYLM</sequence>
<gene>
    <name evidence="1" type="primary">mraY</name>
    <name type="ordered locus">SP70585_0400</name>
</gene>
<dbReference type="EC" id="2.7.8.13" evidence="1"/>
<dbReference type="EMBL" id="CP000918">
    <property type="protein sequence ID" value="ACO17405.1"/>
    <property type="molecule type" value="Genomic_DNA"/>
</dbReference>
<dbReference type="RefSeq" id="WP_000470785.1">
    <property type="nucleotide sequence ID" value="NC_012468.1"/>
</dbReference>
<dbReference type="SMR" id="C1CBB5"/>
<dbReference type="KEGG" id="snm:SP70585_0400"/>
<dbReference type="HOGENOM" id="CLU_023982_0_1_9"/>
<dbReference type="UniPathway" id="UPA00219"/>
<dbReference type="Proteomes" id="UP000002211">
    <property type="component" value="Chromosome"/>
</dbReference>
<dbReference type="GO" id="GO:0005886">
    <property type="term" value="C:plasma membrane"/>
    <property type="evidence" value="ECO:0007669"/>
    <property type="project" value="UniProtKB-SubCell"/>
</dbReference>
<dbReference type="GO" id="GO:0046872">
    <property type="term" value="F:metal ion binding"/>
    <property type="evidence" value="ECO:0007669"/>
    <property type="project" value="UniProtKB-KW"/>
</dbReference>
<dbReference type="GO" id="GO:0008963">
    <property type="term" value="F:phospho-N-acetylmuramoyl-pentapeptide-transferase activity"/>
    <property type="evidence" value="ECO:0007669"/>
    <property type="project" value="UniProtKB-UniRule"/>
</dbReference>
<dbReference type="GO" id="GO:0051301">
    <property type="term" value="P:cell division"/>
    <property type="evidence" value="ECO:0007669"/>
    <property type="project" value="UniProtKB-KW"/>
</dbReference>
<dbReference type="GO" id="GO:0071555">
    <property type="term" value="P:cell wall organization"/>
    <property type="evidence" value="ECO:0007669"/>
    <property type="project" value="UniProtKB-KW"/>
</dbReference>
<dbReference type="GO" id="GO:0009252">
    <property type="term" value="P:peptidoglycan biosynthetic process"/>
    <property type="evidence" value="ECO:0007669"/>
    <property type="project" value="UniProtKB-UniRule"/>
</dbReference>
<dbReference type="GO" id="GO:0008360">
    <property type="term" value="P:regulation of cell shape"/>
    <property type="evidence" value="ECO:0007669"/>
    <property type="project" value="UniProtKB-KW"/>
</dbReference>
<dbReference type="CDD" id="cd06852">
    <property type="entry name" value="GT_MraY"/>
    <property type="match status" value="1"/>
</dbReference>
<dbReference type="HAMAP" id="MF_00038">
    <property type="entry name" value="MraY"/>
    <property type="match status" value="1"/>
</dbReference>
<dbReference type="InterPro" id="IPR000715">
    <property type="entry name" value="Glycosyl_transferase_4"/>
</dbReference>
<dbReference type="InterPro" id="IPR003524">
    <property type="entry name" value="PNAcMuramoyl-5peptid_Trfase"/>
</dbReference>
<dbReference type="InterPro" id="IPR018480">
    <property type="entry name" value="PNAcMuramoyl-5peptid_Trfase_CS"/>
</dbReference>
<dbReference type="NCBIfam" id="TIGR00445">
    <property type="entry name" value="mraY"/>
    <property type="match status" value="1"/>
</dbReference>
<dbReference type="PANTHER" id="PTHR22926">
    <property type="entry name" value="PHOSPHO-N-ACETYLMURAMOYL-PENTAPEPTIDE-TRANSFERASE"/>
    <property type="match status" value="1"/>
</dbReference>
<dbReference type="PANTHER" id="PTHR22926:SF5">
    <property type="entry name" value="PHOSPHO-N-ACETYLMURAMOYL-PENTAPEPTIDE-TRANSFERASE HOMOLOG"/>
    <property type="match status" value="1"/>
</dbReference>
<dbReference type="Pfam" id="PF00953">
    <property type="entry name" value="Glycos_transf_4"/>
    <property type="match status" value="1"/>
</dbReference>
<dbReference type="Pfam" id="PF10555">
    <property type="entry name" value="MraY_sig1"/>
    <property type="match status" value="1"/>
</dbReference>
<dbReference type="PROSITE" id="PS01347">
    <property type="entry name" value="MRAY_1"/>
    <property type="match status" value="1"/>
</dbReference>
<dbReference type="PROSITE" id="PS01348">
    <property type="entry name" value="MRAY_2"/>
    <property type="match status" value="1"/>
</dbReference>
<proteinExistence type="inferred from homology"/>
<protein>
    <recommendedName>
        <fullName evidence="1">Phospho-N-acetylmuramoyl-pentapeptide-transferase</fullName>
        <ecNumber evidence="1">2.7.8.13</ecNumber>
    </recommendedName>
    <alternativeName>
        <fullName evidence="1">UDP-MurNAc-pentapeptide phosphotransferase</fullName>
    </alternativeName>
</protein>